<comment type="catalytic activity">
    <reaction>
        <text>tRNA(Phe) + L-phenylalanine + ATP = L-phenylalanyl-tRNA(Phe) + AMP + diphosphate + H(+)</text>
        <dbReference type="Rhea" id="RHEA:19413"/>
        <dbReference type="Rhea" id="RHEA-COMP:9668"/>
        <dbReference type="Rhea" id="RHEA-COMP:9699"/>
        <dbReference type="ChEBI" id="CHEBI:15378"/>
        <dbReference type="ChEBI" id="CHEBI:30616"/>
        <dbReference type="ChEBI" id="CHEBI:33019"/>
        <dbReference type="ChEBI" id="CHEBI:58095"/>
        <dbReference type="ChEBI" id="CHEBI:78442"/>
        <dbReference type="ChEBI" id="CHEBI:78531"/>
        <dbReference type="ChEBI" id="CHEBI:456215"/>
        <dbReference type="EC" id="6.1.1.20"/>
    </reaction>
</comment>
<comment type="cofactor">
    <cofactor evidence="2">
        <name>Mg(2+)</name>
        <dbReference type="ChEBI" id="CHEBI:18420"/>
    </cofactor>
</comment>
<comment type="subunit">
    <text evidence="1">Tetramer of two alpha and two beta subunits.</text>
</comment>
<comment type="subcellular location">
    <subcellularLocation>
        <location evidence="1">Cytoplasm</location>
    </subcellularLocation>
</comment>
<comment type="similarity">
    <text evidence="4">Belongs to the class-II aminoacyl-tRNA synthetase family. Phe-tRNA synthetase alpha subunit type 2 subfamily.</text>
</comment>
<protein>
    <recommendedName>
        <fullName>Probable phenylalanine--tRNA ligase alpha subunit</fullName>
        <ecNumber>6.1.1.20</ecNumber>
    </recommendedName>
    <alternativeName>
        <fullName>Phenylalanyl-tRNA synthetase alpha subunit</fullName>
        <shortName>PheRS</shortName>
    </alternativeName>
</protein>
<keyword id="KW-0030">Aminoacyl-tRNA synthetase</keyword>
<keyword id="KW-0067">ATP-binding</keyword>
<keyword id="KW-0963">Cytoplasm</keyword>
<keyword id="KW-0436">Ligase</keyword>
<keyword id="KW-0460">Magnesium</keyword>
<keyword id="KW-0479">Metal-binding</keyword>
<keyword id="KW-0547">Nucleotide-binding</keyword>
<keyword id="KW-0648">Protein biosynthesis</keyword>
<feature type="chain" id="PRO_0000388408" description="Probable phenylalanine--tRNA ligase alpha subunit">
    <location>
        <begin position="1"/>
        <end position="488"/>
    </location>
</feature>
<feature type="region of interest" description="Contains the major tRNA-Phe binding sites" evidence="1">
    <location>
        <begin position="1"/>
        <end position="146"/>
    </location>
</feature>
<feature type="binding site" evidence="3">
    <location>
        <position position="315"/>
    </location>
    <ligand>
        <name>L-phenylalanine</name>
        <dbReference type="ChEBI" id="CHEBI:58095"/>
    </ligand>
</feature>
<feature type="binding site" evidence="3">
    <location>
        <begin position="363"/>
        <end position="365"/>
    </location>
    <ligand>
        <name>L-phenylalanine</name>
        <dbReference type="ChEBI" id="CHEBI:58095"/>
    </ligand>
</feature>
<feature type="binding site" evidence="3">
    <location>
        <position position="403"/>
    </location>
    <ligand>
        <name>L-phenylalanine</name>
        <dbReference type="ChEBI" id="CHEBI:58095"/>
    </ligand>
</feature>
<feature type="binding site" evidence="2">
    <location>
        <position position="405"/>
    </location>
    <ligand>
        <name>Mg(2+)</name>
        <dbReference type="ChEBI" id="CHEBI:18420"/>
        <note>shared with beta subunit</note>
    </ligand>
</feature>
<feature type="binding site" evidence="3">
    <location>
        <position position="429"/>
    </location>
    <ligand>
        <name>L-phenylalanine</name>
        <dbReference type="ChEBI" id="CHEBI:58095"/>
    </ligand>
</feature>
<organism>
    <name type="scientific">Enterocytozoon bieneusi (strain H348)</name>
    <name type="common">Microsporidian parasite</name>
    <dbReference type="NCBI Taxonomy" id="481877"/>
    <lineage>
        <taxon>Eukaryota</taxon>
        <taxon>Fungi</taxon>
        <taxon>Fungi incertae sedis</taxon>
        <taxon>Microsporidia</taxon>
        <taxon>Enterocytozoonidae</taxon>
        <taxon>Enterocytozoon</taxon>
    </lineage>
</organism>
<gene>
    <name type="ORF">EBI_22775</name>
</gene>
<sequence length="488" mass="56356">MSIEQDILNLLAVKNIISSDELNCKSTDIHGVLLSLSSKKVVDYTIIPIVERVLTPQGRQVEKEGSQEYNLITMLMKSNLSIDNIDKTTLKYAFKNKWIKMENNQIVLSGTTIQDITQKLLRNLDSISKDEFEELKKRKLVDINKKNIYKITRGENFNIEQKDIINELTTQNLFNISDTSLLKKYNFNLSKVSRFFGSLHPLTKIKSEFKRIFLEMGFSEMNTGKYVESSFWNFDSLFQPQNHPSREIQDTFFLKVPRLNDLNDVDSQYINRVESIHSSTSIPVDEGYDKCYSKGHNNVWSVAEAKKNILRTHTTAISSQMLYKLAQSNLKAEIKNYNIKLFSIDKVFRNETVDATHLAEFHQVEGLISGENLGIKELIHTIKTFFTKLNIHQIRFKPAFNPYTEPSMEIFGYHPQLKKWIELGNSGIFRPEMLLPMGFPKNVVVIAWGLSLERPAMIKLGLKNIRDLVGHKISVEFIRDSPVIFMNK</sequence>
<name>SYFA_ENTBH</name>
<evidence type="ECO:0000250" key="1"/>
<evidence type="ECO:0000250" key="2">
    <source>
        <dbReference type="UniProtKB" id="A5K9S0"/>
    </source>
</evidence>
<evidence type="ECO:0000250" key="3">
    <source>
        <dbReference type="UniProtKB" id="Q9Y285"/>
    </source>
</evidence>
<evidence type="ECO:0000305" key="4"/>
<accession>B7XI98</accession>
<proteinExistence type="inferred from homology"/>
<reference key="1">
    <citation type="journal article" date="2007" name="PLoS ONE">
        <title>Patterns of genome evolution among the microsporidian parasites Encephalitozoon cuniculi, Antonospora locustae and Enterocytozoon bieneusi.</title>
        <authorList>
            <person name="Corradi N."/>
            <person name="Akiyoshi D.E."/>
            <person name="Morrison H.G."/>
            <person name="Feng X."/>
            <person name="Weiss L.M."/>
            <person name="Tzipori S."/>
            <person name="Keeling P.J."/>
        </authorList>
    </citation>
    <scope>NUCLEOTIDE SEQUENCE [LARGE SCALE GENOMIC DNA]</scope>
    <source>
        <strain>H348</strain>
    </source>
</reference>
<reference key="2">
    <citation type="journal article" date="2009" name="PLoS Pathog.">
        <title>Genomic survey of the non-cultivatable opportunistic human pathogen, Enterocytozoon bieneusi.</title>
        <authorList>
            <person name="Akiyoshi D.E."/>
            <person name="Morrison H.G."/>
            <person name="Lei S."/>
            <person name="Feng X."/>
            <person name="Zhang Q."/>
            <person name="Corradi N."/>
            <person name="Mayanja H."/>
            <person name="Tumwine J.K."/>
            <person name="Keeling P.J."/>
            <person name="Weiss L.M."/>
            <person name="Tzipori S."/>
        </authorList>
    </citation>
    <scope>NUCLEOTIDE SEQUENCE [LARGE SCALE GENOMIC DNA]</scope>
    <source>
        <strain>H348</strain>
    </source>
</reference>
<dbReference type="EC" id="6.1.1.20"/>
<dbReference type="EMBL" id="ABGB01000017">
    <property type="protein sequence ID" value="EED44391.1"/>
    <property type="molecule type" value="Genomic_DNA"/>
</dbReference>
<dbReference type="RefSeq" id="XP_002649726.1">
    <property type="nucleotide sequence ID" value="XM_002649680.1"/>
</dbReference>
<dbReference type="SMR" id="B7XI98"/>
<dbReference type="FunCoup" id="B7XI98">
    <property type="interactions" value="332"/>
</dbReference>
<dbReference type="STRING" id="481877.B7XI98"/>
<dbReference type="VEuPathDB" id="MicrosporidiaDB:EBI_22775"/>
<dbReference type="HOGENOM" id="CLU_025086_2_2_1"/>
<dbReference type="InParanoid" id="B7XI98"/>
<dbReference type="OMA" id="QIEGWVM"/>
<dbReference type="OrthoDB" id="238316at2759"/>
<dbReference type="GO" id="GO:0005829">
    <property type="term" value="C:cytosol"/>
    <property type="evidence" value="ECO:0007669"/>
    <property type="project" value="TreeGrafter"/>
</dbReference>
<dbReference type="GO" id="GO:0009328">
    <property type="term" value="C:phenylalanine-tRNA ligase complex"/>
    <property type="evidence" value="ECO:0007669"/>
    <property type="project" value="EnsemblFungi"/>
</dbReference>
<dbReference type="GO" id="GO:0002161">
    <property type="term" value="F:aminoacyl-tRNA deacylase activity"/>
    <property type="evidence" value="ECO:0007669"/>
    <property type="project" value="EnsemblFungi"/>
</dbReference>
<dbReference type="GO" id="GO:0005524">
    <property type="term" value="F:ATP binding"/>
    <property type="evidence" value="ECO:0007669"/>
    <property type="project" value="UniProtKB-KW"/>
</dbReference>
<dbReference type="GO" id="GO:0000287">
    <property type="term" value="F:magnesium ion binding"/>
    <property type="evidence" value="ECO:0000250"/>
    <property type="project" value="UniProtKB"/>
</dbReference>
<dbReference type="GO" id="GO:0004826">
    <property type="term" value="F:phenylalanine-tRNA ligase activity"/>
    <property type="evidence" value="ECO:0007669"/>
    <property type="project" value="UniProtKB-EC"/>
</dbReference>
<dbReference type="GO" id="GO:0000049">
    <property type="term" value="F:tRNA binding"/>
    <property type="evidence" value="ECO:0007669"/>
    <property type="project" value="InterPro"/>
</dbReference>
<dbReference type="GO" id="GO:0006432">
    <property type="term" value="P:phenylalanyl-tRNA aminoacylation"/>
    <property type="evidence" value="ECO:0007669"/>
    <property type="project" value="EnsemblFungi"/>
</dbReference>
<dbReference type="CDD" id="cd00496">
    <property type="entry name" value="PheRS_alpha_core"/>
    <property type="match status" value="1"/>
</dbReference>
<dbReference type="Gene3D" id="1.10.10.2320">
    <property type="match status" value="1"/>
</dbReference>
<dbReference type="Gene3D" id="1.10.10.2330">
    <property type="match status" value="1"/>
</dbReference>
<dbReference type="Gene3D" id="3.30.1370.240">
    <property type="match status" value="1"/>
</dbReference>
<dbReference type="Gene3D" id="3.30.930.10">
    <property type="entry name" value="Bira Bifunctional Protein, Domain 2"/>
    <property type="match status" value="1"/>
</dbReference>
<dbReference type="InterPro" id="IPR006195">
    <property type="entry name" value="aa-tRNA-synth_II"/>
</dbReference>
<dbReference type="InterPro" id="IPR045864">
    <property type="entry name" value="aa-tRNA-synth_II/BPL/LPL"/>
</dbReference>
<dbReference type="InterPro" id="IPR004529">
    <property type="entry name" value="Phe-tRNA-synth_IIc_asu"/>
</dbReference>
<dbReference type="InterPro" id="IPR002319">
    <property type="entry name" value="Phenylalanyl-tRNA_Synthase"/>
</dbReference>
<dbReference type="NCBIfam" id="TIGR00468">
    <property type="entry name" value="pheS"/>
    <property type="match status" value="1"/>
</dbReference>
<dbReference type="NCBIfam" id="NF003210">
    <property type="entry name" value="PRK04172.1"/>
    <property type="match status" value="1"/>
</dbReference>
<dbReference type="PANTHER" id="PTHR11538:SF40">
    <property type="entry name" value="PHENYLALANINE--TRNA LIGASE ALPHA SUBUNIT"/>
    <property type="match status" value="1"/>
</dbReference>
<dbReference type="PANTHER" id="PTHR11538">
    <property type="entry name" value="PHENYLALANYL-TRNA SYNTHETASE"/>
    <property type="match status" value="1"/>
</dbReference>
<dbReference type="Pfam" id="PF01409">
    <property type="entry name" value="tRNA-synt_2d"/>
    <property type="match status" value="1"/>
</dbReference>
<dbReference type="SUPFAM" id="SSF55681">
    <property type="entry name" value="Class II aaRS and biotin synthetases"/>
    <property type="match status" value="1"/>
</dbReference>
<dbReference type="PROSITE" id="PS50862">
    <property type="entry name" value="AA_TRNA_LIGASE_II"/>
    <property type="match status" value="1"/>
</dbReference>